<feature type="chain" id="PRO_0000103837" description="Putative antitoxin VapB10">
    <location>
        <begin position="1"/>
        <end position="85"/>
    </location>
</feature>
<feature type="region of interest" description="Disordered" evidence="1">
    <location>
        <begin position="64"/>
        <end position="85"/>
    </location>
</feature>
<feature type="compositionally biased region" description="Basic and acidic residues" evidence="1">
    <location>
        <begin position="64"/>
        <end position="76"/>
    </location>
</feature>
<sequence length="85" mass="9444">MKRTNIYLDEEQTASLDKLAAQEGVSRAELIRLLLNRALTTAGDDLASDLQAINDSFGTLRHLDPPVRRSGGREQHLAQVWRATS</sequence>
<evidence type="ECO:0000256" key="1">
    <source>
        <dbReference type="SAM" id="MobiDB-lite"/>
    </source>
</evidence>
<evidence type="ECO:0000305" key="2">
    <source>
    </source>
</evidence>
<name>VPB10_MYCTU</name>
<organism>
    <name type="scientific">Mycobacterium tuberculosis (strain ATCC 25618 / H37Rv)</name>
    <dbReference type="NCBI Taxonomy" id="83332"/>
    <lineage>
        <taxon>Bacteria</taxon>
        <taxon>Bacillati</taxon>
        <taxon>Actinomycetota</taxon>
        <taxon>Actinomycetes</taxon>
        <taxon>Mycobacteriales</taxon>
        <taxon>Mycobacteriaceae</taxon>
        <taxon>Mycobacterium</taxon>
        <taxon>Mycobacterium tuberculosis complex</taxon>
    </lineage>
</organism>
<accession>P9WLZ1</accession>
<accession>L0T6R3</accession>
<accession>P64835</accession>
<accession>P71666</accession>
<keyword id="KW-1185">Reference proteome</keyword>
<keyword id="KW-1277">Toxin-antitoxin system</keyword>
<reference key="1">
    <citation type="journal article" date="1998" name="Nature">
        <title>Deciphering the biology of Mycobacterium tuberculosis from the complete genome sequence.</title>
        <authorList>
            <person name="Cole S.T."/>
            <person name="Brosch R."/>
            <person name="Parkhill J."/>
            <person name="Garnier T."/>
            <person name="Churcher C.M."/>
            <person name="Harris D.E."/>
            <person name="Gordon S.V."/>
            <person name="Eiglmeier K."/>
            <person name="Gas S."/>
            <person name="Barry C.E. III"/>
            <person name="Tekaia F."/>
            <person name="Badcock K."/>
            <person name="Basham D."/>
            <person name="Brown D."/>
            <person name="Chillingworth T."/>
            <person name="Connor R."/>
            <person name="Davies R.M."/>
            <person name="Devlin K."/>
            <person name="Feltwell T."/>
            <person name="Gentles S."/>
            <person name="Hamlin N."/>
            <person name="Holroyd S."/>
            <person name="Hornsby T."/>
            <person name="Jagels K."/>
            <person name="Krogh A."/>
            <person name="McLean J."/>
            <person name="Moule S."/>
            <person name="Murphy L.D."/>
            <person name="Oliver S."/>
            <person name="Osborne J."/>
            <person name="Quail M.A."/>
            <person name="Rajandream M.A."/>
            <person name="Rogers J."/>
            <person name="Rutter S."/>
            <person name="Seeger K."/>
            <person name="Skelton S."/>
            <person name="Squares S."/>
            <person name="Squares R."/>
            <person name="Sulston J.E."/>
            <person name="Taylor K."/>
            <person name="Whitehead S."/>
            <person name="Barrell B.G."/>
        </authorList>
    </citation>
    <scope>NUCLEOTIDE SEQUENCE [LARGE SCALE GENOMIC DNA]</scope>
    <source>
        <strain>ATCC 25618 / H37Rv</strain>
    </source>
</reference>
<reference key="2">
    <citation type="journal article" date="2005" name="Nucleic Acids Res.">
        <title>Toxin-antitoxin loci are highly abundant in free-living but lost from host-associated prokaryotes.</title>
        <authorList>
            <person name="Pandey D.P."/>
            <person name="Gerdes K."/>
        </authorList>
    </citation>
    <scope>POSSIBLE FUNCTION</scope>
    <source>
        <strain>ATCC 25618 / H37Rv</strain>
    </source>
</reference>
<reference key="3">
    <citation type="journal article" date="2011" name="Mol. Cell. Proteomics">
        <title>Proteogenomic analysis of Mycobacterium tuberculosis by high resolution mass spectrometry.</title>
        <authorList>
            <person name="Kelkar D.S."/>
            <person name="Kumar D."/>
            <person name="Kumar P."/>
            <person name="Balakrishnan L."/>
            <person name="Muthusamy B."/>
            <person name="Yadav A.K."/>
            <person name="Shrivastava P."/>
            <person name="Marimuthu A."/>
            <person name="Anand S."/>
            <person name="Sundaram H."/>
            <person name="Kingsbury R."/>
            <person name="Harsha H.C."/>
            <person name="Nair B."/>
            <person name="Prasad T.S."/>
            <person name="Chauhan D.S."/>
            <person name="Katoch K."/>
            <person name="Katoch V.M."/>
            <person name="Kumar P."/>
            <person name="Chaerkady R."/>
            <person name="Ramachandran S."/>
            <person name="Dash D."/>
            <person name="Pandey A."/>
        </authorList>
    </citation>
    <scope>IDENTIFICATION BY MASS SPECTROMETRY [LARGE SCALE ANALYSIS]</scope>
    <source>
        <strain>ATCC 25618 / H37Rv</strain>
    </source>
</reference>
<gene>
    <name type="primary">vapB10</name>
    <name type="ordered locus">Rv1398c</name>
    <name type="ORF">MTCY21B4.15c</name>
</gene>
<protein>
    <recommendedName>
        <fullName>Putative antitoxin VapB10</fullName>
    </recommendedName>
</protein>
<comment type="function">
    <text evidence="2">Putative antitoxin component of a possible type II toxin-antitoxin (TA) system. The cognate toxin is VapC10.</text>
</comment>
<proteinExistence type="evidence at protein level"/>
<dbReference type="EMBL" id="AL123456">
    <property type="protein sequence ID" value="CCP44157.1"/>
    <property type="molecule type" value="Genomic_DNA"/>
</dbReference>
<dbReference type="PIR" id="C70900">
    <property type="entry name" value="C70900"/>
</dbReference>
<dbReference type="RefSeq" id="NP_215914.1">
    <property type="nucleotide sequence ID" value="NC_000962.3"/>
</dbReference>
<dbReference type="RefSeq" id="WP_003407272.1">
    <property type="nucleotide sequence ID" value="NZ_NVQJ01000038.1"/>
</dbReference>
<dbReference type="SMR" id="P9WLZ1"/>
<dbReference type="STRING" id="83332.Rv1398c"/>
<dbReference type="PaxDb" id="83332-Rv1398c"/>
<dbReference type="DNASU" id="886759"/>
<dbReference type="GeneID" id="886759"/>
<dbReference type="KEGG" id="mtu:Rv1398c"/>
<dbReference type="KEGG" id="mtv:RVBD_1398c"/>
<dbReference type="TubercuList" id="Rv1398c"/>
<dbReference type="eggNOG" id="ENOG5033HQ9">
    <property type="taxonomic scope" value="Bacteria"/>
</dbReference>
<dbReference type="InParanoid" id="P9WLZ1"/>
<dbReference type="OrthoDB" id="4735215at2"/>
<dbReference type="Proteomes" id="UP000001584">
    <property type="component" value="Chromosome"/>
</dbReference>
<dbReference type="GO" id="GO:0005886">
    <property type="term" value="C:plasma membrane"/>
    <property type="evidence" value="ECO:0007005"/>
    <property type="project" value="MTBBASE"/>
</dbReference>
<dbReference type="GO" id="GO:0006355">
    <property type="term" value="P:regulation of DNA-templated transcription"/>
    <property type="evidence" value="ECO:0007669"/>
    <property type="project" value="InterPro"/>
</dbReference>
<dbReference type="CDD" id="cd21631">
    <property type="entry name" value="RHH_CopG_NikR-like"/>
    <property type="match status" value="1"/>
</dbReference>
<dbReference type="Gene3D" id="1.10.1220.10">
    <property type="entry name" value="Met repressor-like"/>
    <property type="match status" value="1"/>
</dbReference>
<dbReference type="InterPro" id="IPR013321">
    <property type="entry name" value="Arc_rbn_hlx_hlx"/>
</dbReference>
<dbReference type="InterPro" id="IPR002145">
    <property type="entry name" value="CopG"/>
</dbReference>
<dbReference type="InterPro" id="IPR010985">
    <property type="entry name" value="Ribbon_hlx_hlx"/>
</dbReference>
<dbReference type="Pfam" id="PF01402">
    <property type="entry name" value="RHH_1"/>
    <property type="match status" value="1"/>
</dbReference>
<dbReference type="SUPFAM" id="SSF47598">
    <property type="entry name" value="Ribbon-helix-helix"/>
    <property type="match status" value="1"/>
</dbReference>